<accession>Q607F6</accession>
<protein>
    <recommendedName>
        <fullName evidence="1">Acetyl-coenzyme A carboxylase carboxyl transferase subunit alpha</fullName>
        <shortName evidence="1">ACCase subunit alpha</shortName>
        <shortName evidence="1">Acetyl-CoA carboxylase carboxyltransferase subunit alpha</shortName>
        <ecNumber evidence="1">2.1.3.15</ecNumber>
    </recommendedName>
</protein>
<keyword id="KW-0067">ATP-binding</keyword>
<keyword id="KW-0963">Cytoplasm</keyword>
<keyword id="KW-0275">Fatty acid biosynthesis</keyword>
<keyword id="KW-0276">Fatty acid metabolism</keyword>
<keyword id="KW-0444">Lipid biosynthesis</keyword>
<keyword id="KW-0443">Lipid metabolism</keyword>
<keyword id="KW-0547">Nucleotide-binding</keyword>
<keyword id="KW-1185">Reference proteome</keyword>
<keyword id="KW-0808">Transferase</keyword>
<gene>
    <name evidence="1" type="primary">accA</name>
    <name type="ordered locus">MCA1804</name>
</gene>
<comment type="function">
    <text evidence="1">Component of the acetyl coenzyme A carboxylase (ACC) complex. First, biotin carboxylase catalyzes the carboxylation of biotin on its carrier protein (BCCP) and then the CO(2) group is transferred by the carboxyltransferase to acetyl-CoA to form malonyl-CoA.</text>
</comment>
<comment type="catalytic activity">
    <reaction evidence="1">
        <text>N(6)-carboxybiotinyl-L-lysyl-[protein] + acetyl-CoA = N(6)-biotinyl-L-lysyl-[protein] + malonyl-CoA</text>
        <dbReference type="Rhea" id="RHEA:54728"/>
        <dbReference type="Rhea" id="RHEA-COMP:10505"/>
        <dbReference type="Rhea" id="RHEA-COMP:10506"/>
        <dbReference type="ChEBI" id="CHEBI:57288"/>
        <dbReference type="ChEBI" id="CHEBI:57384"/>
        <dbReference type="ChEBI" id="CHEBI:83144"/>
        <dbReference type="ChEBI" id="CHEBI:83145"/>
        <dbReference type="EC" id="2.1.3.15"/>
    </reaction>
</comment>
<comment type="pathway">
    <text evidence="1">Lipid metabolism; malonyl-CoA biosynthesis; malonyl-CoA from acetyl-CoA: step 1/1.</text>
</comment>
<comment type="subunit">
    <text evidence="1">Acetyl-CoA carboxylase is a heterohexamer composed of biotin carboxyl carrier protein (AccB), biotin carboxylase (AccC) and two subunits each of ACCase subunit alpha (AccA) and ACCase subunit beta (AccD).</text>
</comment>
<comment type="subcellular location">
    <subcellularLocation>
        <location evidence="1">Cytoplasm</location>
    </subcellularLocation>
</comment>
<comment type="similarity">
    <text evidence="1">Belongs to the AccA family.</text>
</comment>
<dbReference type="EC" id="2.1.3.15" evidence="1"/>
<dbReference type="EMBL" id="AE017282">
    <property type="protein sequence ID" value="AAU92175.1"/>
    <property type="molecule type" value="Genomic_DNA"/>
</dbReference>
<dbReference type="RefSeq" id="WP_010961057.1">
    <property type="nucleotide sequence ID" value="NC_002977.6"/>
</dbReference>
<dbReference type="SMR" id="Q607F6"/>
<dbReference type="STRING" id="243233.MCA1804"/>
<dbReference type="GeneID" id="88224052"/>
<dbReference type="KEGG" id="mca:MCA1804"/>
<dbReference type="eggNOG" id="COG0825">
    <property type="taxonomic scope" value="Bacteria"/>
</dbReference>
<dbReference type="HOGENOM" id="CLU_015486_0_2_6"/>
<dbReference type="UniPathway" id="UPA00655">
    <property type="reaction ID" value="UER00711"/>
</dbReference>
<dbReference type="Proteomes" id="UP000006821">
    <property type="component" value="Chromosome"/>
</dbReference>
<dbReference type="GO" id="GO:0009317">
    <property type="term" value="C:acetyl-CoA carboxylase complex"/>
    <property type="evidence" value="ECO:0007669"/>
    <property type="project" value="InterPro"/>
</dbReference>
<dbReference type="GO" id="GO:0003989">
    <property type="term" value="F:acetyl-CoA carboxylase activity"/>
    <property type="evidence" value="ECO:0007669"/>
    <property type="project" value="InterPro"/>
</dbReference>
<dbReference type="GO" id="GO:0005524">
    <property type="term" value="F:ATP binding"/>
    <property type="evidence" value="ECO:0007669"/>
    <property type="project" value="UniProtKB-KW"/>
</dbReference>
<dbReference type="GO" id="GO:0016743">
    <property type="term" value="F:carboxyl- or carbamoyltransferase activity"/>
    <property type="evidence" value="ECO:0007669"/>
    <property type="project" value="UniProtKB-UniRule"/>
</dbReference>
<dbReference type="GO" id="GO:0006633">
    <property type="term" value="P:fatty acid biosynthetic process"/>
    <property type="evidence" value="ECO:0007669"/>
    <property type="project" value="UniProtKB-KW"/>
</dbReference>
<dbReference type="GO" id="GO:2001295">
    <property type="term" value="P:malonyl-CoA biosynthetic process"/>
    <property type="evidence" value="ECO:0007669"/>
    <property type="project" value="UniProtKB-UniRule"/>
</dbReference>
<dbReference type="FunFam" id="3.90.226.10:FF:000008">
    <property type="entry name" value="Acetyl-coenzyme A carboxylase carboxyl transferase subunit alpha"/>
    <property type="match status" value="1"/>
</dbReference>
<dbReference type="Gene3D" id="3.90.226.10">
    <property type="entry name" value="2-enoyl-CoA Hydratase, Chain A, domain 1"/>
    <property type="match status" value="1"/>
</dbReference>
<dbReference type="HAMAP" id="MF_00823">
    <property type="entry name" value="AcetylCoA_CT_alpha"/>
    <property type="match status" value="1"/>
</dbReference>
<dbReference type="InterPro" id="IPR001095">
    <property type="entry name" value="Acetyl_CoA_COase_a_su"/>
</dbReference>
<dbReference type="InterPro" id="IPR029045">
    <property type="entry name" value="ClpP/crotonase-like_dom_sf"/>
</dbReference>
<dbReference type="InterPro" id="IPR011763">
    <property type="entry name" value="COA_CT_C"/>
</dbReference>
<dbReference type="NCBIfam" id="TIGR00513">
    <property type="entry name" value="accA"/>
    <property type="match status" value="1"/>
</dbReference>
<dbReference type="NCBIfam" id="NF041504">
    <property type="entry name" value="AccA_sub"/>
    <property type="match status" value="1"/>
</dbReference>
<dbReference type="NCBIfam" id="NF004344">
    <property type="entry name" value="PRK05724.1"/>
    <property type="match status" value="1"/>
</dbReference>
<dbReference type="PANTHER" id="PTHR42853">
    <property type="entry name" value="ACETYL-COENZYME A CARBOXYLASE CARBOXYL TRANSFERASE SUBUNIT ALPHA"/>
    <property type="match status" value="1"/>
</dbReference>
<dbReference type="PANTHER" id="PTHR42853:SF3">
    <property type="entry name" value="ACETYL-COENZYME A CARBOXYLASE CARBOXYL TRANSFERASE SUBUNIT ALPHA, CHLOROPLASTIC"/>
    <property type="match status" value="1"/>
</dbReference>
<dbReference type="Pfam" id="PF03255">
    <property type="entry name" value="ACCA"/>
    <property type="match status" value="1"/>
</dbReference>
<dbReference type="PRINTS" id="PR01069">
    <property type="entry name" value="ACCCTRFRASEA"/>
</dbReference>
<dbReference type="SUPFAM" id="SSF52096">
    <property type="entry name" value="ClpP/crotonase"/>
    <property type="match status" value="1"/>
</dbReference>
<dbReference type="PROSITE" id="PS50989">
    <property type="entry name" value="COA_CT_CTER"/>
    <property type="match status" value="1"/>
</dbReference>
<evidence type="ECO:0000255" key="1">
    <source>
        <dbReference type="HAMAP-Rule" id="MF_00823"/>
    </source>
</evidence>
<evidence type="ECO:0000255" key="2">
    <source>
        <dbReference type="PROSITE-ProRule" id="PRU01137"/>
    </source>
</evidence>
<proteinExistence type="inferred from homology"/>
<name>ACCA_METCA</name>
<feature type="chain" id="PRO_0000223787" description="Acetyl-coenzyme A carboxylase carboxyl transferase subunit alpha">
    <location>
        <begin position="1"/>
        <end position="321"/>
    </location>
</feature>
<feature type="domain" description="CoA carboxyltransferase C-terminal" evidence="2">
    <location>
        <begin position="39"/>
        <end position="293"/>
    </location>
</feature>
<organism>
    <name type="scientific">Methylococcus capsulatus (strain ATCC 33009 / NCIMB 11132 / Bath)</name>
    <dbReference type="NCBI Taxonomy" id="243233"/>
    <lineage>
        <taxon>Bacteria</taxon>
        <taxon>Pseudomonadati</taxon>
        <taxon>Pseudomonadota</taxon>
        <taxon>Gammaproteobacteria</taxon>
        <taxon>Methylococcales</taxon>
        <taxon>Methylococcaceae</taxon>
        <taxon>Methylococcus</taxon>
    </lineage>
</organism>
<reference key="1">
    <citation type="journal article" date="2004" name="PLoS Biol.">
        <title>Genomic insights into methanotrophy: the complete genome sequence of Methylococcus capsulatus (Bath).</title>
        <authorList>
            <person name="Ward N.L."/>
            <person name="Larsen O."/>
            <person name="Sakwa J."/>
            <person name="Bruseth L."/>
            <person name="Khouri H.M."/>
            <person name="Durkin A.S."/>
            <person name="Dimitrov G."/>
            <person name="Jiang L."/>
            <person name="Scanlan D."/>
            <person name="Kang K.H."/>
            <person name="Lewis M.R."/>
            <person name="Nelson K.E."/>
            <person name="Methe B.A."/>
            <person name="Wu M."/>
            <person name="Heidelberg J.F."/>
            <person name="Paulsen I.T."/>
            <person name="Fouts D.E."/>
            <person name="Ravel J."/>
            <person name="Tettelin H."/>
            <person name="Ren Q."/>
            <person name="Read T.D."/>
            <person name="DeBoy R.T."/>
            <person name="Seshadri R."/>
            <person name="Salzberg S.L."/>
            <person name="Jensen H.B."/>
            <person name="Birkeland N.K."/>
            <person name="Nelson W.C."/>
            <person name="Dodson R.J."/>
            <person name="Grindhaug S.H."/>
            <person name="Holt I.E."/>
            <person name="Eidhammer I."/>
            <person name="Jonasen I."/>
            <person name="Vanaken S."/>
            <person name="Utterback T.R."/>
            <person name="Feldblyum T.V."/>
            <person name="Fraser C.M."/>
            <person name="Lillehaug J.R."/>
            <person name="Eisen J.A."/>
        </authorList>
    </citation>
    <scope>NUCLEOTIDE SEQUENCE [LARGE SCALE GENOMIC DNA]</scope>
    <source>
        <strain>ATCC 33009 / NCIMB 11132 / Bath</strain>
    </source>
</reference>
<sequence length="321" mass="35899">MDLKFLDFEQPIAELEAKIEELRHVGFDNEINISEEISKLEEKSRKLTESVFSSLSAWQISQISRHPQRPHSRDYIDLIFQEFHELHGDRAFADDPAIIGGLARLDGAAVLVIGHQKGRDTKEKIHRNFGMPRPEGYRKALRLMRLAERFRLPIVCLIDTPGAYPGINAEERGQSEAIARNLFEMAQLQTPIVCVVIGEGGSGGALAIGVGDRLLMLQYSTYSVISPEGCASILWKSADKAELAAEAMGITSERLMELGLIDSIVPEPLGGAHRDRERMADNLKTELKRNLEELAALPMEELLAMRYERLMGYGVYEEPAT</sequence>